<name>RNC_GEOSL</name>
<protein>
    <recommendedName>
        <fullName evidence="1">Ribonuclease 3</fullName>
        <ecNumber evidence="1">3.1.26.3</ecNumber>
    </recommendedName>
    <alternativeName>
        <fullName evidence="1">Ribonuclease III</fullName>
        <shortName evidence="1">RNase III</shortName>
    </alternativeName>
</protein>
<feature type="chain" id="PRO_0000228535" description="Ribonuclease 3">
    <location>
        <begin position="1"/>
        <end position="248"/>
    </location>
</feature>
<feature type="domain" description="RNase III" evidence="1">
    <location>
        <begin position="16"/>
        <end position="145"/>
    </location>
</feature>
<feature type="domain" description="DRBM" evidence="1">
    <location>
        <begin position="172"/>
        <end position="241"/>
    </location>
</feature>
<feature type="active site" evidence="1">
    <location>
        <position position="62"/>
    </location>
</feature>
<feature type="active site" evidence="1">
    <location>
        <position position="134"/>
    </location>
</feature>
<feature type="binding site" evidence="1">
    <location>
        <position position="58"/>
    </location>
    <ligand>
        <name>Mg(2+)</name>
        <dbReference type="ChEBI" id="CHEBI:18420"/>
    </ligand>
</feature>
<feature type="binding site" evidence="1">
    <location>
        <position position="131"/>
    </location>
    <ligand>
        <name>Mg(2+)</name>
        <dbReference type="ChEBI" id="CHEBI:18420"/>
    </ligand>
</feature>
<feature type="binding site" evidence="1">
    <location>
        <position position="134"/>
    </location>
    <ligand>
        <name>Mg(2+)</name>
        <dbReference type="ChEBI" id="CHEBI:18420"/>
    </ligand>
</feature>
<sequence>MRETDEQPVAGGAASTEGLETSIGYRFTDRRFLDEALTHRSWLNEVRSPTVPDNERLEFFGDAILGFCIGKMLLRHYPESREGALARMKSALVGEETLADLAAAVELGSYLRLGRGEERSGGRHRRSLLANALEALLAAMYLDGGMAPVERLVDAWFGPRLAGVAAGIKGRDFKTDFQELAQAQYGGLPRYVLVDTSGPAHDLRFTVAAYVGERLLGQGTGRSKKEAEQAAARQCLERLETGRCSAAP</sequence>
<comment type="function">
    <text evidence="1">Digests double-stranded RNA. Involved in the processing of primary rRNA transcript to yield the immediate precursors to the large and small rRNAs (23S and 16S). Processes some mRNAs, and tRNAs when they are encoded in the rRNA operon. Processes pre-crRNA and tracrRNA of type II CRISPR loci if present in the organism.</text>
</comment>
<comment type="catalytic activity">
    <reaction evidence="1">
        <text>Endonucleolytic cleavage to 5'-phosphomonoester.</text>
        <dbReference type="EC" id="3.1.26.3"/>
    </reaction>
</comment>
<comment type="cofactor">
    <cofactor evidence="1">
        <name>Mg(2+)</name>
        <dbReference type="ChEBI" id="CHEBI:18420"/>
    </cofactor>
</comment>
<comment type="subunit">
    <text evidence="1">Homodimer.</text>
</comment>
<comment type="subcellular location">
    <subcellularLocation>
        <location evidence="1">Cytoplasm</location>
    </subcellularLocation>
</comment>
<comment type="similarity">
    <text evidence="1">Belongs to the ribonuclease III family.</text>
</comment>
<proteinExistence type="inferred from homology"/>
<dbReference type="EC" id="3.1.26.3" evidence="1"/>
<dbReference type="EMBL" id="AE017180">
    <property type="protein sequence ID" value="AAR35604.1"/>
    <property type="molecule type" value="Genomic_DNA"/>
</dbReference>
<dbReference type="RefSeq" id="NP_953277.1">
    <property type="nucleotide sequence ID" value="NC_002939.5"/>
</dbReference>
<dbReference type="RefSeq" id="WP_010942868.1">
    <property type="nucleotide sequence ID" value="NC_002939.5"/>
</dbReference>
<dbReference type="SMR" id="Q74AX1"/>
<dbReference type="FunCoup" id="Q74AX1">
    <property type="interactions" value="459"/>
</dbReference>
<dbReference type="STRING" id="243231.GSU2228"/>
<dbReference type="EnsemblBacteria" id="AAR35604">
    <property type="protein sequence ID" value="AAR35604"/>
    <property type="gene ID" value="GSU2228"/>
</dbReference>
<dbReference type="KEGG" id="gsu:GSU2228"/>
<dbReference type="PATRIC" id="fig|243231.5.peg.2259"/>
<dbReference type="eggNOG" id="COG0571">
    <property type="taxonomic scope" value="Bacteria"/>
</dbReference>
<dbReference type="HOGENOM" id="CLU_000907_1_3_7"/>
<dbReference type="InParanoid" id="Q74AX1"/>
<dbReference type="OrthoDB" id="9805026at2"/>
<dbReference type="Proteomes" id="UP000000577">
    <property type="component" value="Chromosome"/>
</dbReference>
<dbReference type="GO" id="GO:0005829">
    <property type="term" value="C:cytosol"/>
    <property type="evidence" value="ECO:0000318"/>
    <property type="project" value="GO_Central"/>
</dbReference>
<dbReference type="GO" id="GO:0003725">
    <property type="term" value="F:double-stranded RNA binding"/>
    <property type="evidence" value="ECO:0000318"/>
    <property type="project" value="GO_Central"/>
</dbReference>
<dbReference type="GO" id="GO:0046872">
    <property type="term" value="F:metal ion binding"/>
    <property type="evidence" value="ECO:0007669"/>
    <property type="project" value="UniProtKB-KW"/>
</dbReference>
<dbReference type="GO" id="GO:0004525">
    <property type="term" value="F:ribonuclease III activity"/>
    <property type="evidence" value="ECO:0000318"/>
    <property type="project" value="GO_Central"/>
</dbReference>
<dbReference type="GO" id="GO:0019843">
    <property type="term" value="F:rRNA binding"/>
    <property type="evidence" value="ECO:0007669"/>
    <property type="project" value="UniProtKB-KW"/>
</dbReference>
<dbReference type="GO" id="GO:0006397">
    <property type="term" value="P:mRNA processing"/>
    <property type="evidence" value="ECO:0007669"/>
    <property type="project" value="UniProtKB-UniRule"/>
</dbReference>
<dbReference type="GO" id="GO:0010468">
    <property type="term" value="P:regulation of gene expression"/>
    <property type="evidence" value="ECO:0000318"/>
    <property type="project" value="GO_Central"/>
</dbReference>
<dbReference type="GO" id="GO:0006396">
    <property type="term" value="P:RNA processing"/>
    <property type="evidence" value="ECO:0000318"/>
    <property type="project" value="GO_Central"/>
</dbReference>
<dbReference type="GO" id="GO:0006364">
    <property type="term" value="P:rRNA processing"/>
    <property type="evidence" value="ECO:0007669"/>
    <property type="project" value="UniProtKB-UniRule"/>
</dbReference>
<dbReference type="GO" id="GO:0008033">
    <property type="term" value="P:tRNA processing"/>
    <property type="evidence" value="ECO:0007669"/>
    <property type="project" value="UniProtKB-KW"/>
</dbReference>
<dbReference type="CDD" id="cd10845">
    <property type="entry name" value="DSRM_RNAse_III_family"/>
    <property type="match status" value="1"/>
</dbReference>
<dbReference type="CDD" id="cd00593">
    <property type="entry name" value="RIBOc"/>
    <property type="match status" value="1"/>
</dbReference>
<dbReference type="FunFam" id="1.10.1520.10:FF:000001">
    <property type="entry name" value="Ribonuclease 3"/>
    <property type="match status" value="1"/>
</dbReference>
<dbReference type="FunFam" id="3.30.160.20:FF:000003">
    <property type="entry name" value="Ribonuclease 3"/>
    <property type="match status" value="1"/>
</dbReference>
<dbReference type="Gene3D" id="3.30.160.20">
    <property type="match status" value="1"/>
</dbReference>
<dbReference type="Gene3D" id="1.10.1520.10">
    <property type="entry name" value="Ribonuclease III domain"/>
    <property type="match status" value="1"/>
</dbReference>
<dbReference type="HAMAP" id="MF_00104">
    <property type="entry name" value="RNase_III"/>
    <property type="match status" value="1"/>
</dbReference>
<dbReference type="InterPro" id="IPR014720">
    <property type="entry name" value="dsRBD_dom"/>
</dbReference>
<dbReference type="InterPro" id="IPR011907">
    <property type="entry name" value="RNase_III"/>
</dbReference>
<dbReference type="InterPro" id="IPR000999">
    <property type="entry name" value="RNase_III_dom"/>
</dbReference>
<dbReference type="InterPro" id="IPR036389">
    <property type="entry name" value="RNase_III_sf"/>
</dbReference>
<dbReference type="NCBIfam" id="TIGR02191">
    <property type="entry name" value="RNaseIII"/>
    <property type="match status" value="1"/>
</dbReference>
<dbReference type="PANTHER" id="PTHR11207:SF0">
    <property type="entry name" value="RIBONUCLEASE 3"/>
    <property type="match status" value="1"/>
</dbReference>
<dbReference type="PANTHER" id="PTHR11207">
    <property type="entry name" value="RIBONUCLEASE III"/>
    <property type="match status" value="1"/>
</dbReference>
<dbReference type="Pfam" id="PF00035">
    <property type="entry name" value="dsrm"/>
    <property type="match status" value="1"/>
</dbReference>
<dbReference type="Pfam" id="PF14622">
    <property type="entry name" value="Ribonucleas_3_3"/>
    <property type="match status" value="1"/>
</dbReference>
<dbReference type="SMART" id="SM00358">
    <property type="entry name" value="DSRM"/>
    <property type="match status" value="1"/>
</dbReference>
<dbReference type="SMART" id="SM00535">
    <property type="entry name" value="RIBOc"/>
    <property type="match status" value="1"/>
</dbReference>
<dbReference type="SUPFAM" id="SSF54768">
    <property type="entry name" value="dsRNA-binding domain-like"/>
    <property type="match status" value="1"/>
</dbReference>
<dbReference type="SUPFAM" id="SSF69065">
    <property type="entry name" value="RNase III domain-like"/>
    <property type="match status" value="1"/>
</dbReference>
<dbReference type="PROSITE" id="PS50137">
    <property type="entry name" value="DS_RBD"/>
    <property type="match status" value="1"/>
</dbReference>
<dbReference type="PROSITE" id="PS50142">
    <property type="entry name" value="RNASE_3_2"/>
    <property type="match status" value="1"/>
</dbReference>
<reference key="1">
    <citation type="journal article" date="2003" name="Science">
        <title>Genome of Geobacter sulfurreducens: metal reduction in subsurface environments.</title>
        <authorList>
            <person name="Methe B.A."/>
            <person name="Nelson K.E."/>
            <person name="Eisen J.A."/>
            <person name="Paulsen I.T."/>
            <person name="Nelson W.C."/>
            <person name="Heidelberg J.F."/>
            <person name="Wu D."/>
            <person name="Wu M."/>
            <person name="Ward N.L."/>
            <person name="Beanan M.J."/>
            <person name="Dodson R.J."/>
            <person name="Madupu R."/>
            <person name="Brinkac L.M."/>
            <person name="Daugherty S.C."/>
            <person name="DeBoy R.T."/>
            <person name="Durkin A.S."/>
            <person name="Gwinn M.L."/>
            <person name="Kolonay J.F."/>
            <person name="Sullivan S.A."/>
            <person name="Haft D.H."/>
            <person name="Selengut J."/>
            <person name="Davidsen T.M."/>
            <person name="Zafar N."/>
            <person name="White O."/>
            <person name="Tran B."/>
            <person name="Romero C."/>
            <person name="Forberger H.A."/>
            <person name="Weidman J.F."/>
            <person name="Khouri H.M."/>
            <person name="Feldblyum T.V."/>
            <person name="Utterback T.R."/>
            <person name="Van Aken S.E."/>
            <person name="Lovley D.R."/>
            <person name="Fraser C.M."/>
        </authorList>
    </citation>
    <scope>NUCLEOTIDE SEQUENCE [LARGE SCALE GENOMIC DNA]</scope>
    <source>
        <strain>ATCC 51573 / DSM 12127 / PCA</strain>
    </source>
</reference>
<accession>Q74AX1</accession>
<organism>
    <name type="scientific">Geobacter sulfurreducens (strain ATCC 51573 / DSM 12127 / PCA)</name>
    <dbReference type="NCBI Taxonomy" id="243231"/>
    <lineage>
        <taxon>Bacteria</taxon>
        <taxon>Pseudomonadati</taxon>
        <taxon>Thermodesulfobacteriota</taxon>
        <taxon>Desulfuromonadia</taxon>
        <taxon>Geobacterales</taxon>
        <taxon>Geobacteraceae</taxon>
        <taxon>Geobacter</taxon>
    </lineage>
</organism>
<evidence type="ECO:0000255" key="1">
    <source>
        <dbReference type="HAMAP-Rule" id="MF_00104"/>
    </source>
</evidence>
<gene>
    <name evidence="1" type="primary">rnc</name>
    <name type="ordered locus">GSU2228</name>
</gene>
<keyword id="KW-0963">Cytoplasm</keyword>
<keyword id="KW-0255">Endonuclease</keyword>
<keyword id="KW-0378">Hydrolase</keyword>
<keyword id="KW-0460">Magnesium</keyword>
<keyword id="KW-0479">Metal-binding</keyword>
<keyword id="KW-0507">mRNA processing</keyword>
<keyword id="KW-0540">Nuclease</keyword>
<keyword id="KW-1185">Reference proteome</keyword>
<keyword id="KW-0694">RNA-binding</keyword>
<keyword id="KW-0698">rRNA processing</keyword>
<keyword id="KW-0699">rRNA-binding</keyword>
<keyword id="KW-0819">tRNA processing</keyword>